<protein>
    <recommendedName>
        <fullName evidence="1">Small ribosomal subunit protein bS18</fullName>
    </recommendedName>
    <alternativeName>
        <fullName evidence="2">30S ribosomal protein S18</fullName>
    </alternativeName>
</protein>
<accession>B1LQM1</accession>
<reference key="1">
    <citation type="journal article" date="2008" name="J. Bacteriol.">
        <title>Insights into the environmental resistance gene pool from the genome sequence of the multidrug-resistant environmental isolate Escherichia coli SMS-3-5.</title>
        <authorList>
            <person name="Fricke W.F."/>
            <person name="Wright M.S."/>
            <person name="Lindell A.H."/>
            <person name="Harkins D.M."/>
            <person name="Baker-Austin C."/>
            <person name="Ravel J."/>
            <person name="Stepanauskas R."/>
        </authorList>
    </citation>
    <scope>NUCLEOTIDE SEQUENCE [LARGE SCALE GENOMIC DNA]</scope>
    <source>
        <strain>SMS-3-5 / SECEC</strain>
    </source>
</reference>
<gene>
    <name evidence="1" type="primary">rpsR</name>
    <name type="ordered locus">EcSMS35_4672</name>
</gene>
<evidence type="ECO:0000255" key="1">
    <source>
        <dbReference type="HAMAP-Rule" id="MF_00270"/>
    </source>
</evidence>
<evidence type="ECO:0000305" key="2"/>
<organism>
    <name type="scientific">Escherichia coli (strain SMS-3-5 / SECEC)</name>
    <dbReference type="NCBI Taxonomy" id="439855"/>
    <lineage>
        <taxon>Bacteria</taxon>
        <taxon>Pseudomonadati</taxon>
        <taxon>Pseudomonadota</taxon>
        <taxon>Gammaproteobacteria</taxon>
        <taxon>Enterobacterales</taxon>
        <taxon>Enterobacteriaceae</taxon>
        <taxon>Escherichia</taxon>
    </lineage>
</organism>
<feature type="chain" id="PRO_1000119280" description="Small ribosomal subunit protein bS18">
    <location>
        <begin position="1"/>
        <end position="75"/>
    </location>
</feature>
<proteinExistence type="inferred from homology"/>
<sequence>MARYFRRRKFCRFTAEGVQEIDYKDIATLKNYITESGKIVPSRITGTRAKYQRQLARAIKRARYLSLLPYTDRHQ</sequence>
<comment type="function">
    <text evidence="1">Binds as a heterodimer with protein bS6 to the central domain of the 16S rRNA, where it helps stabilize the platform of the 30S subunit.</text>
</comment>
<comment type="subunit">
    <text evidence="1">Part of the 30S ribosomal subunit. Forms a tight heterodimer with protein bS6.</text>
</comment>
<comment type="similarity">
    <text evidence="1">Belongs to the bacterial ribosomal protein bS18 family.</text>
</comment>
<dbReference type="EMBL" id="CP000970">
    <property type="protein sequence ID" value="ACB15916.1"/>
    <property type="molecule type" value="Genomic_DNA"/>
</dbReference>
<dbReference type="RefSeq" id="WP_000135199.1">
    <property type="nucleotide sequence ID" value="NC_010498.1"/>
</dbReference>
<dbReference type="SMR" id="B1LQM1"/>
<dbReference type="GeneID" id="98186237"/>
<dbReference type="KEGG" id="ecm:EcSMS35_4672"/>
<dbReference type="HOGENOM" id="CLU_148710_2_3_6"/>
<dbReference type="Proteomes" id="UP000007011">
    <property type="component" value="Chromosome"/>
</dbReference>
<dbReference type="GO" id="GO:0022627">
    <property type="term" value="C:cytosolic small ribosomal subunit"/>
    <property type="evidence" value="ECO:0007669"/>
    <property type="project" value="TreeGrafter"/>
</dbReference>
<dbReference type="GO" id="GO:0070181">
    <property type="term" value="F:small ribosomal subunit rRNA binding"/>
    <property type="evidence" value="ECO:0007669"/>
    <property type="project" value="TreeGrafter"/>
</dbReference>
<dbReference type="GO" id="GO:0003735">
    <property type="term" value="F:structural constituent of ribosome"/>
    <property type="evidence" value="ECO:0007669"/>
    <property type="project" value="InterPro"/>
</dbReference>
<dbReference type="GO" id="GO:0006412">
    <property type="term" value="P:translation"/>
    <property type="evidence" value="ECO:0007669"/>
    <property type="project" value="UniProtKB-UniRule"/>
</dbReference>
<dbReference type="FunFam" id="4.10.640.10:FF:000001">
    <property type="entry name" value="30S ribosomal protein S18"/>
    <property type="match status" value="1"/>
</dbReference>
<dbReference type="Gene3D" id="4.10.640.10">
    <property type="entry name" value="Ribosomal protein S18"/>
    <property type="match status" value="1"/>
</dbReference>
<dbReference type="HAMAP" id="MF_00270">
    <property type="entry name" value="Ribosomal_bS18"/>
    <property type="match status" value="1"/>
</dbReference>
<dbReference type="InterPro" id="IPR001648">
    <property type="entry name" value="Ribosomal_bS18"/>
</dbReference>
<dbReference type="InterPro" id="IPR018275">
    <property type="entry name" value="Ribosomal_bS18_CS"/>
</dbReference>
<dbReference type="InterPro" id="IPR036870">
    <property type="entry name" value="Ribosomal_bS18_sf"/>
</dbReference>
<dbReference type="NCBIfam" id="TIGR00165">
    <property type="entry name" value="S18"/>
    <property type="match status" value="1"/>
</dbReference>
<dbReference type="PANTHER" id="PTHR13479">
    <property type="entry name" value="30S RIBOSOMAL PROTEIN S18"/>
    <property type="match status" value="1"/>
</dbReference>
<dbReference type="PANTHER" id="PTHR13479:SF40">
    <property type="entry name" value="SMALL RIBOSOMAL SUBUNIT PROTEIN BS18M"/>
    <property type="match status" value="1"/>
</dbReference>
<dbReference type="Pfam" id="PF01084">
    <property type="entry name" value="Ribosomal_S18"/>
    <property type="match status" value="1"/>
</dbReference>
<dbReference type="PRINTS" id="PR00974">
    <property type="entry name" value="RIBOSOMALS18"/>
</dbReference>
<dbReference type="SUPFAM" id="SSF46911">
    <property type="entry name" value="Ribosomal protein S18"/>
    <property type="match status" value="1"/>
</dbReference>
<dbReference type="PROSITE" id="PS00057">
    <property type="entry name" value="RIBOSOMAL_S18"/>
    <property type="match status" value="1"/>
</dbReference>
<name>RS18_ECOSM</name>
<keyword id="KW-0687">Ribonucleoprotein</keyword>
<keyword id="KW-0689">Ribosomal protein</keyword>
<keyword id="KW-0694">RNA-binding</keyword>
<keyword id="KW-0699">rRNA-binding</keyword>